<dbReference type="EC" id="5.2.1.8" evidence="1"/>
<dbReference type="EMBL" id="CP001186">
    <property type="protein sequence ID" value="ACK96868.1"/>
    <property type="molecule type" value="Genomic_DNA"/>
</dbReference>
<dbReference type="RefSeq" id="WP_000105215.1">
    <property type="nucleotide sequence ID" value="NC_011772.1"/>
</dbReference>
<dbReference type="SMR" id="B7IIY4"/>
<dbReference type="GeneID" id="72451149"/>
<dbReference type="KEGG" id="bcg:BCG9842_B0643"/>
<dbReference type="HOGENOM" id="CLU_033058_3_2_9"/>
<dbReference type="Proteomes" id="UP000006744">
    <property type="component" value="Chromosome"/>
</dbReference>
<dbReference type="GO" id="GO:0005737">
    <property type="term" value="C:cytoplasm"/>
    <property type="evidence" value="ECO:0007669"/>
    <property type="project" value="UniProtKB-SubCell"/>
</dbReference>
<dbReference type="GO" id="GO:0003755">
    <property type="term" value="F:peptidyl-prolyl cis-trans isomerase activity"/>
    <property type="evidence" value="ECO:0007669"/>
    <property type="project" value="UniProtKB-UniRule"/>
</dbReference>
<dbReference type="GO" id="GO:0044183">
    <property type="term" value="F:protein folding chaperone"/>
    <property type="evidence" value="ECO:0007669"/>
    <property type="project" value="TreeGrafter"/>
</dbReference>
<dbReference type="GO" id="GO:0043022">
    <property type="term" value="F:ribosome binding"/>
    <property type="evidence" value="ECO:0007669"/>
    <property type="project" value="TreeGrafter"/>
</dbReference>
<dbReference type="GO" id="GO:0051083">
    <property type="term" value="P:'de novo' cotranslational protein folding"/>
    <property type="evidence" value="ECO:0007669"/>
    <property type="project" value="TreeGrafter"/>
</dbReference>
<dbReference type="GO" id="GO:0051301">
    <property type="term" value="P:cell division"/>
    <property type="evidence" value="ECO:0007669"/>
    <property type="project" value="UniProtKB-KW"/>
</dbReference>
<dbReference type="GO" id="GO:0061077">
    <property type="term" value="P:chaperone-mediated protein folding"/>
    <property type="evidence" value="ECO:0007669"/>
    <property type="project" value="TreeGrafter"/>
</dbReference>
<dbReference type="GO" id="GO:0015031">
    <property type="term" value="P:protein transport"/>
    <property type="evidence" value="ECO:0007669"/>
    <property type="project" value="UniProtKB-UniRule"/>
</dbReference>
<dbReference type="GO" id="GO:0043335">
    <property type="term" value="P:protein unfolding"/>
    <property type="evidence" value="ECO:0007669"/>
    <property type="project" value="TreeGrafter"/>
</dbReference>
<dbReference type="FunFam" id="3.10.50.40:FF:000001">
    <property type="entry name" value="Trigger factor"/>
    <property type="match status" value="1"/>
</dbReference>
<dbReference type="FunFam" id="3.30.70.1050:FF:000002">
    <property type="entry name" value="Trigger factor"/>
    <property type="match status" value="1"/>
</dbReference>
<dbReference type="Gene3D" id="3.10.50.40">
    <property type="match status" value="1"/>
</dbReference>
<dbReference type="Gene3D" id="3.30.70.1050">
    <property type="entry name" value="Trigger factor ribosome-binding domain"/>
    <property type="match status" value="1"/>
</dbReference>
<dbReference type="Gene3D" id="1.10.3120.10">
    <property type="entry name" value="Trigger factor, C-terminal domain"/>
    <property type="match status" value="1"/>
</dbReference>
<dbReference type="HAMAP" id="MF_00303">
    <property type="entry name" value="Trigger_factor_Tig"/>
    <property type="match status" value="1"/>
</dbReference>
<dbReference type="InterPro" id="IPR046357">
    <property type="entry name" value="PPIase_dom_sf"/>
</dbReference>
<dbReference type="InterPro" id="IPR001179">
    <property type="entry name" value="PPIase_FKBP_dom"/>
</dbReference>
<dbReference type="InterPro" id="IPR005215">
    <property type="entry name" value="Trig_fac"/>
</dbReference>
<dbReference type="InterPro" id="IPR008880">
    <property type="entry name" value="Trigger_fac_C"/>
</dbReference>
<dbReference type="InterPro" id="IPR037041">
    <property type="entry name" value="Trigger_fac_C_sf"/>
</dbReference>
<dbReference type="InterPro" id="IPR008881">
    <property type="entry name" value="Trigger_fac_ribosome-bd_bac"/>
</dbReference>
<dbReference type="InterPro" id="IPR036611">
    <property type="entry name" value="Trigger_fac_ribosome-bd_sf"/>
</dbReference>
<dbReference type="InterPro" id="IPR027304">
    <property type="entry name" value="Trigger_fact/SurA_dom_sf"/>
</dbReference>
<dbReference type="NCBIfam" id="TIGR00115">
    <property type="entry name" value="tig"/>
    <property type="match status" value="1"/>
</dbReference>
<dbReference type="PANTHER" id="PTHR30560">
    <property type="entry name" value="TRIGGER FACTOR CHAPERONE AND PEPTIDYL-PROLYL CIS/TRANS ISOMERASE"/>
    <property type="match status" value="1"/>
</dbReference>
<dbReference type="PANTHER" id="PTHR30560:SF3">
    <property type="entry name" value="TRIGGER FACTOR-LIKE PROTEIN TIG, CHLOROPLASTIC"/>
    <property type="match status" value="1"/>
</dbReference>
<dbReference type="Pfam" id="PF00254">
    <property type="entry name" value="FKBP_C"/>
    <property type="match status" value="1"/>
</dbReference>
<dbReference type="Pfam" id="PF05698">
    <property type="entry name" value="Trigger_C"/>
    <property type="match status" value="1"/>
</dbReference>
<dbReference type="Pfam" id="PF05697">
    <property type="entry name" value="Trigger_N"/>
    <property type="match status" value="1"/>
</dbReference>
<dbReference type="PIRSF" id="PIRSF003095">
    <property type="entry name" value="Trigger_factor"/>
    <property type="match status" value="1"/>
</dbReference>
<dbReference type="SUPFAM" id="SSF54534">
    <property type="entry name" value="FKBP-like"/>
    <property type="match status" value="1"/>
</dbReference>
<dbReference type="SUPFAM" id="SSF109998">
    <property type="entry name" value="Triger factor/SurA peptide-binding domain-like"/>
    <property type="match status" value="1"/>
</dbReference>
<dbReference type="SUPFAM" id="SSF102735">
    <property type="entry name" value="Trigger factor ribosome-binding domain"/>
    <property type="match status" value="1"/>
</dbReference>
<dbReference type="PROSITE" id="PS50059">
    <property type="entry name" value="FKBP_PPIASE"/>
    <property type="match status" value="1"/>
</dbReference>
<comment type="function">
    <text evidence="1">Involved in protein export. Acts as a chaperone by maintaining the newly synthesized protein in an open conformation. Functions as a peptidyl-prolyl cis-trans isomerase.</text>
</comment>
<comment type="catalytic activity">
    <reaction evidence="1">
        <text>[protein]-peptidylproline (omega=180) = [protein]-peptidylproline (omega=0)</text>
        <dbReference type="Rhea" id="RHEA:16237"/>
        <dbReference type="Rhea" id="RHEA-COMP:10747"/>
        <dbReference type="Rhea" id="RHEA-COMP:10748"/>
        <dbReference type="ChEBI" id="CHEBI:83833"/>
        <dbReference type="ChEBI" id="CHEBI:83834"/>
        <dbReference type="EC" id="5.2.1.8"/>
    </reaction>
</comment>
<comment type="subcellular location">
    <subcellularLocation>
        <location>Cytoplasm</location>
    </subcellularLocation>
    <text evidence="1">About half TF is bound to the ribosome near the polypeptide exit tunnel while the other half is free in the cytoplasm.</text>
</comment>
<comment type="domain">
    <text evidence="1">Consists of 3 domains; the N-terminus binds the ribosome, the middle domain has PPIase activity, while the C-terminus has intrinsic chaperone activity on its own.</text>
</comment>
<comment type="similarity">
    <text evidence="1">Belongs to the FKBP-type PPIase family. Tig subfamily.</text>
</comment>
<reference key="1">
    <citation type="submission" date="2008-10" db="EMBL/GenBank/DDBJ databases">
        <title>Genome sequence of Bacillus cereus G9842.</title>
        <authorList>
            <person name="Dodson R.J."/>
            <person name="Durkin A.S."/>
            <person name="Rosovitz M.J."/>
            <person name="Rasko D.A."/>
            <person name="Hoffmaster A."/>
            <person name="Ravel J."/>
            <person name="Sutton G."/>
        </authorList>
    </citation>
    <scope>NUCLEOTIDE SEQUENCE [LARGE SCALE GENOMIC DNA]</scope>
    <source>
        <strain>G9842</strain>
    </source>
</reference>
<organism>
    <name type="scientific">Bacillus cereus (strain G9842)</name>
    <dbReference type="NCBI Taxonomy" id="405531"/>
    <lineage>
        <taxon>Bacteria</taxon>
        <taxon>Bacillati</taxon>
        <taxon>Bacillota</taxon>
        <taxon>Bacilli</taxon>
        <taxon>Bacillales</taxon>
        <taxon>Bacillaceae</taxon>
        <taxon>Bacillus</taxon>
        <taxon>Bacillus cereus group</taxon>
    </lineage>
</organism>
<proteinExistence type="inferred from homology"/>
<keyword id="KW-0131">Cell cycle</keyword>
<keyword id="KW-0132">Cell division</keyword>
<keyword id="KW-0143">Chaperone</keyword>
<keyword id="KW-0963">Cytoplasm</keyword>
<keyword id="KW-0413">Isomerase</keyword>
<keyword id="KW-0697">Rotamase</keyword>
<protein>
    <recommendedName>
        <fullName evidence="1">Trigger factor</fullName>
        <shortName evidence="1">TF</shortName>
        <ecNumber evidence="1">5.2.1.8</ecNumber>
    </recommendedName>
    <alternativeName>
        <fullName evidence="1">PPIase</fullName>
    </alternativeName>
</protein>
<gene>
    <name evidence="1" type="primary">tig</name>
    <name type="ordered locus">BCG9842_B0643</name>
</gene>
<accession>B7IIY4</accession>
<name>TIG_BACC2</name>
<feature type="chain" id="PRO_1000119509" description="Trigger factor">
    <location>
        <begin position="1"/>
        <end position="425"/>
    </location>
</feature>
<feature type="domain" description="PPIase FKBP-type" evidence="1">
    <location>
        <begin position="163"/>
        <end position="248"/>
    </location>
</feature>
<evidence type="ECO:0000255" key="1">
    <source>
        <dbReference type="HAMAP-Rule" id="MF_00303"/>
    </source>
</evidence>
<sequence length="425" mass="47345">MSTKWEKLEGNVGVLTIEVDAKEVNNSIDAAFKKVVKTINVPGFRKGKMPRPLFEQRFGIESLYQDALDIILPKAYGEAIEEAGIFPVDHPEIDIEKFEKNANLIFTAKVTVKPEVKLGEYKGLAVEKVETTVTDEDVENELKSLQERQAELVVKEEGTVENGDTAVIDFEGFVDGEAFEGGKGENYSLAIGSGTFIPGFEEQVIGLKSGESKDVEVSFPEEYHAAELAGKPATFKVTIHEIKTKELPELNDEFAKEADEAVATLDELKAKLRTNLEEGKKHEAEHKVRDEVVELAAANAEIEIPEAMINTELDRMVREFEQRLSQQGMNLELYYQFTGTDADKLKEQMKEDAQKRVRINLVLEAIIEAENIEVTEEEVTAEVEKMAEMYGMPVDAIKQALGSVDALAEDLKVRKAVDFLVENAA</sequence>